<protein>
    <recommendedName>
        <fullName>Urokinase-type plasminogen activator</fullName>
        <shortName>U-plasminogen activator</shortName>
        <shortName>uPA</shortName>
        <ecNumber>3.4.21.73</ecNumber>
    </recommendedName>
    <component>
        <recommendedName>
            <fullName>Urokinase-type plasminogen activator long chain A</fullName>
        </recommendedName>
    </component>
    <component>
        <recommendedName>
            <fullName>Urokinase-type plasminogen activator short chain A</fullName>
        </recommendedName>
    </component>
    <component>
        <recommendedName>
            <fullName>Urokinase-type plasminogen activator chain B</fullName>
        </recommendedName>
    </component>
</protein>
<gene>
    <name type="primary">Plau</name>
</gene>
<proteinExistence type="evidence at protein level"/>
<name>UROK_MOUSE</name>
<dbReference type="EC" id="3.4.21.73"/>
<dbReference type="EMBL" id="X02389">
    <property type="protein sequence ID" value="CAA26231.1"/>
    <property type="molecule type" value="mRNA"/>
</dbReference>
<dbReference type="EMBL" id="M17922">
    <property type="protein sequence ID" value="AAA40539.1"/>
    <property type="molecule type" value="Genomic_DNA"/>
</dbReference>
<dbReference type="CCDS" id="CCDS26858.1"/>
<dbReference type="PIR" id="A29420">
    <property type="entry name" value="UKMS"/>
</dbReference>
<dbReference type="RefSeq" id="NP_032899.1">
    <property type="nucleotide sequence ID" value="NM_008873.3"/>
</dbReference>
<dbReference type="RefSeq" id="XP_017171408.1">
    <property type="nucleotide sequence ID" value="XM_017315919.3"/>
</dbReference>
<dbReference type="PDB" id="3LAQ">
    <property type="method" value="X-ray"/>
    <property type="resolution" value="3.20 A"/>
    <property type="chains" value="A/B=21-154"/>
</dbReference>
<dbReference type="PDB" id="5LHN">
    <property type="method" value="X-ray"/>
    <property type="resolution" value="2.55 A"/>
    <property type="chains" value="A=180-426"/>
</dbReference>
<dbReference type="PDB" id="5LHP">
    <property type="method" value="X-ray"/>
    <property type="resolution" value="2.63 A"/>
    <property type="chains" value="A=180-426"/>
</dbReference>
<dbReference type="PDB" id="5LHQ">
    <property type="method" value="X-ray"/>
    <property type="resolution" value="2.60 A"/>
    <property type="chains" value="A=180-426"/>
</dbReference>
<dbReference type="PDB" id="5LHR">
    <property type="method" value="X-ray"/>
    <property type="resolution" value="2.30 A"/>
    <property type="chains" value="A=180-426"/>
</dbReference>
<dbReference type="PDB" id="5LHS">
    <property type="method" value="X-ray"/>
    <property type="resolution" value="3.05 A"/>
    <property type="chains" value="A/B/C/D=180-426"/>
</dbReference>
<dbReference type="PDB" id="6A8G">
    <property type="method" value="X-ray"/>
    <property type="resolution" value="2.53 A"/>
    <property type="chains" value="A/B=180-426"/>
</dbReference>
<dbReference type="PDB" id="6A8N">
    <property type="method" value="X-ray"/>
    <property type="resolution" value="2.49 A"/>
    <property type="chains" value="A/B=180-426"/>
</dbReference>
<dbReference type="PDBsum" id="3LAQ"/>
<dbReference type="PDBsum" id="5LHN"/>
<dbReference type="PDBsum" id="5LHP"/>
<dbReference type="PDBsum" id="5LHQ"/>
<dbReference type="PDBsum" id="5LHR"/>
<dbReference type="PDBsum" id="5LHS"/>
<dbReference type="PDBsum" id="6A8G"/>
<dbReference type="PDBsum" id="6A8N"/>
<dbReference type="SMR" id="P06869"/>
<dbReference type="BioGRID" id="202230">
    <property type="interactions" value="1"/>
</dbReference>
<dbReference type="ComplexPortal" id="CPX-495">
    <property type="entry name" value="uPA-PAI-1 complex"/>
</dbReference>
<dbReference type="ComplexPortal" id="CPX-510">
    <property type="entry name" value="uPA-uPAR complex"/>
</dbReference>
<dbReference type="ComplexPortal" id="CPX-526">
    <property type="entry name" value="uPA-uPAR-vitronectin complex"/>
</dbReference>
<dbReference type="CORUM" id="P06869"/>
<dbReference type="FunCoup" id="P06869">
    <property type="interactions" value="155"/>
</dbReference>
<dbReference type="IntAct" id="P06869">
    <property type="interactions" value="1"/>
</dbReference>
<dbReference type="STRING" id="10090.ENSMUSP00000022368"/>
<dbReference type="BindingDB" id="P06869"/>
<dbReference type="ChEMBL" id="CHEMBL1075311"/>
<dbReference type="DrugCentral" id="P06869"/>
<dbReference type="MEROPS" id="S01.231"/>
<dbReference type="PhosphoSitePlus" id="P06869"/>
<dbReference type="PaxDb" id="10090-ENSMUSP00000022368"/>
<dbReference type="PeptideAtlas" id="P06869"/>
<dbReference type="ProteomicsDB" id="275390"/>
<dbReference type="Pumba" id="P06869"/>
<dbReference type="ABCD" id="P06869">
    <property type="antibodies" value="2 sequenced antibodies"/>
</dbReference>
<dbReference type="Antibodypedia" id="1899">
    <property type="antibodies" value="1078 antibodies from 44 providers"/>
</dbReference>
<dbReference type="DNASU" id="18792"/>
<dbReference type="Ensembl" id="ENSMUST00000022368.4">
    <property type="protein sequence ID" value="ENSMUSP00000022368.3"/>
    <property type="gene ID" value="ENSMUSG00000021822.4"/>
</dbReference>
<dbReference type="GeneID" id="18792"/>
<dbReference type="KEGG" id="mmu:18792"/>
<dbReference type="UCSC" id="uc007skx.2">
    <property type="organism name" value="mouse"/>
</dbReference>
<dbReference type="AGR" id="MGI:97611"/>
<dbReference type="CTD" id="5328"/>
<dbReference type="MGI" id="MGI:97611">
    <property type="gene designation" value="Plau"/>
</dbReference>
<dbReference type="VEuPathDB" id="HostDB:ENSMUSG00000021822"/>
<dbReference type="eggNOG" id="ENOG502QRMI">
    <property type="taxonomic scope" value="Eukaryota"/>
</dbReference>
<dbReference type="GeneTree" id="ENSGT01050000244971"/>
<dbReference type="HOGENOM" id="CLU_006842_18_4_1"/>
<dbReference type="InParanoid" id="P06869"/>
<dbReference type="OMA" id="WPWCYVQ"/>
<dbReference type="OrthoDB" id="9406323at2759"/>
<dbReference type="PhylomeDB" id="P06869"/>
<dbReference type="TreeFam" id="TF329901"/>
<dbReference type="Reactome" id="R-MMU-6798695">
    <property type="pathway name" value="Neutrophil degranulation"/>
</dbReference>
<dbReference type="Reactome" id="R-MMU-75205">
    <property type="pathway name" value="Dissolution of Fibrin Clot"/>
</dbReference>
<dbReference type="BioGRID-ORCS" id="18792">
    <property type="hits" value="2 hits in 79 CRISPR screens"/>
</dbReference>
<dbReference type="EvolutionaryTrace" id="P06869"/>
<dbReference type="PRO" id="PR:P06869"/>
<dbReference type="Proteomes" id="UP000000589">
    <property type="component" value="Chromosome 14"/>
</dbReference>
<dbReference type="RNAct" id="P06869">
    <property type="molecule type" value="protein"/>
</dbReference>
<dbReference type="Bgee" id="ENSMUSG00000021822">
    <property type="expression patterns" value="Expressed in ectoplacental cone and 110 other cell types or tissues"/>
</dbReference>
<dbReference type="ExpressionAtlas" id="P06869">
    <property type="expression patterns" value="baseline and differential"/>
</dbReference>
<dbReference type="GO" id="GO:0009897">
    <property type="term" value="C:external side of plasma membrane"/>
    <property type="evidence" value="ECO:0000303"/>
    <property type="project" value="ComplexPortal"/>
</dbReference>
<dbReference type="GO" id="GO:0005615">
    <property type="term" value="C:extracellular space"/>
    <property type="evidence" value="ECO:0000250"/>
    <property type="project" value="UniProtKB"/>
</dbReference>
<dbReference type="GO" id="GO:0098637">
    <property type="term" value="C:protein complex involved in cell-matrix adhesion"/>
    <property type="evidence" value="ECO:0000266"/>
    <property type="project" value="ComplexPortal"/>
</dbReference>
<dbReference type="GO" id="GO:0097180">
    <property type="term" value="C:serine protease inhibitor complex"/>
    <property type="evidence" value="ECO:0000266"/>
    <property type="project" value="ComplexPortal"/>
</dbReference>
<dbReference type="GO" id="GO:1905370">
    <property type="term" value="C:serine-type endopeptidase complex"/>
    <property type="evidence" value="ECO:0000353"/>
    <property type="project" value="ComplexPortal"/>
</dbReference>
<dbReference type="GO" id="GO:0004252">
    <property type="term" value="F:serine-type endopeptidase activity"/>
    <property type="evidence" value="ECO:0007669"/>
    <property type="project" value="UniProtKB-EC"/>
</dbReference>
<dbReference type="GO" id="GO:0042730">
    <property type="term" value="P:fibrinolysis"/>
    <property type="evidence" value="ECO:0000315"/>
    <property type="project" value="MGI"/>
</dbReference>
<dbReference type="GO" id="GO:0051918">
    <property type="term" value="P:negative regulation of fibrinolysis"/>
    <property type="evidence" value="ECO:0000303"/>
    <property type="project" value="ComplexPortal"/>
</dbReference>
<dbReference type="GO" id="GO:0010757">
    <property type="term" value="P:negative regulation of plasminogen activation"/>
    <property type="evidence" value="ECO:0000303"/>
    <property type="project" value="ComplexPortal"/>
</dbReference>
<dbReference type="GO" id="GO:0031639">
    <property type="term" value="P:plasminogen activation"/>
    <property type="evidence" value="ECO:0007669"/>
    <property type="project" value="Ensembl"/>
</dbReference>
<dbReference type="GO" id="GO:0030335">
    <property type="term" value="P:positive regulation of cell migration"/>
    <property type="evidence" value="ECO:0000266"/>
    <property type="project" value="MGI"/>
</dbReference>
<dbReference type="GO" id="GO:0030155">
    <property type="term" value="P:regulation of cell adhesion"/>
    <property type="evidence" value="ECO:0000266"/>
    <property type="project" value="ComplexPortal"/>
</dbReference>
<dbReference type="GO" id="GO:0033628">
    <property type="term" value="P:regulation of cell adhesion mediated by integrin"/>
    <property type="evidence" value="ECO:0007669"/>
    <property type="project" value="Ensembl"/>
</dbReference>
<dbReference type="GO" id="GO:0042127">
    <property type="term" value="P:regulation of cell population proliferation"/>
    <property type="evidence" value="ECO:0000316"/>
    <property type="project" value="MGI"/>
</dbReference>
<dbReference type="GO" id="GO:0051917">
    <property type="term" value="P:regulation of fibrinolysis"/>
    <property type="evidence" value="ECO:0000303"/>
    <property type="project" value="ComplexPortal"/>
</dbReference>
<dbReference type="GO" id="GO:0010755">
    <property type="term" value="P:regulation of plasminogen activation"/>
    <property type="evidence" value="ECO:0000303"/>
    <property type="project" value="ComplexPortal"/>
</dbReference>
<dbReference type="GO" id="GO:0014910">
    <property type="term" value="P:regulation of smooth muscle cell migration"/>
    <property type="evidence" value="ECO:0007669"/>
    <property type="project" value="Ensembl"/>
</dbReference>
<dbReference type="GO" id="GO:2000097">
    <property type="term" value="P:regulation of smooth muscle cell-matrix adhesion"/>
    <property type="evidence" value="ECO:0007669"/>
    <property type="project" value="Ensembl"/>
</dbReference>
<dbReference type="GO" id="GO:0001666">
    <property type="term" value="P:response to hypoxia"/>
    <property type="evidence" value="ECO:0000315"/>
    <property type="project" value="MGI"/>
</dbReference>
<dbReference type="GO" id="GO:0014909">
    <property type="term" value="P:smooth muscle cell migration"/>
    <property type="evidence" value="ECO:0000315"/>
    <property type="project" value="MGI"/>
</dbReference>
<dbReference type="GO" id="GO:0038195">
    <property type="term" value="P:urokinase plasminogen activator signaling pathway"/>
    <property type="evidence" value="ECO:0000303"/>
    <property type="project" value="ComplexPortal"/>
</dbReference>
<dbReference type="CDD" id="cd00108">
    <property type="entry name" value="KR"/>
    <property type="match status" value="1"/>
</dbReference>
<dbReference type="CDD" id="cd00190">
    <property type="entry name" value="Tryp_SPc"/>
    <property type="match status" value="1"/>
</dbReference>
<dbReference type="FunFam" id="2.40.10.10:FF:000068">
    <property type="entry name" value="transmembrane protease serine 2"/>
    <property type="match status" value="1"/>
</dbReference>
<dbReference type="FunFam" id="2.10.25.10:FF:000266">
    <property type="entry name" value="Urokinase-type plasminogen activator"/>
    <property type="match status" value="1"/>
</dbReference>
<dbReference type="FunFam" id="2.40.10.10:FF:000065">
    <property type="entry name" value="Urokinase-type plasminogen activator"/>
    <property type="match status" value="1"/>
</dbReference>
<dbReference type="FunFam" id="2.40.20.10:FF:000001">
    <property type="entry name" value="Urokinase-type plasminogen activator"/>
    <property type="match status" value="1"/>
</dbReference>
<dbReference type="Gene3D" id="2.10.25.10">
    <property type="entry name" value="Laminin"/>
    <property type="match status" value="1"/>
</dbReference>
<dbReference type="Gene3D" id="2.40.20.10">
    <property type="entry name" value="Plasminogen Kringle 4"/>
    <property type="match status" value="1"/>
</dbReference>
<dbReference type="Gene3D" id="2.40.10.10">
    <property type="entry name" value="Trypsin-like serine proteases"/>
    <property type="match status" value="1"/>
</dbReference>
<dbReference type="InterPro" id="IPR000742">
    <property type="entry name" value="EGF-like_dom"/>
</dbReference>
<dbReference type="InterPro" id="IPR000001">
    <property type="entry name" value="Kringle"/>
</dbReference>
<dbReference type="InterPro" id="IPR013806">
    <property type="entry name" value="Kringle-like"/>
</dbReference>
<dbReference type="InterPro" id="IPR018056">
    <property type="entry name" value="Kringle_CS"/>
</dbReference>
<dbReference type="InterPro" id="IPR038178">
    <property type="entry name" value="Kringle_sf"/>
</dbReference>
<dbReference type="InterPro" id="IPR009003">
    <property type="entry name" value="Peptidase_S1_PA"/>
</dbReference>
<dbReference type="InterPro" id="IPR043504">
    <property type="entry name" value="Peptidase_S1_PA_chymotrypsin"/>
</dbReference>
<dbReference type="InterPro" id="IPR001314">
    <property type="entry name" value="Peptidase_S1A"/>
</dbReference>
<dbReference type="InterPro" id="IPR050127">
    <property type="entry name" value="Serine_Proteases_S1"/>
</dbReference>
<dbReference type="InterPro" id="IPR001254">
    <property type="entry name" value="Trypsin_dom"/>
</dbReference>
<dbReference type="InterPro" id="IPR033116">
    <property type="entry name" value="TRYPSIN_SER"/>
</dbReference>
<dbReference type="PANTHER" id="PTHR24264">
    <property type="entry name" value="TRYPSIN-RELATED"/>
    <property type="match status" value="1"/>
</dbReference>
<dbReference type="PANTHER" id="PTHR24264:SF38">
    <property type="entry name" value="UROKINASE-TYPE PLASMINOGEN ACTIVATOR"/>
    <property type="match status" value="1"/>
</dbReference>
<dbReference type="Pfam" id="PF00051">
    <property type="entry name" value="Kringle"/>
    <property type="match status" value="1"/>
</dbReference>
<dbReference type="Pfam" id="PF00089">
    <property type="entry name" value="Trypsin"/>
    <property type="match status" value="1"/>
</dbReference>
<dbReference type="PRINTS" id="PR00722">
    <property type="entry name" value="CHYMOTRYPSIN"/>
</dbReference>
<dbReference type="PRINTS" id="PR00018">
    <property type="entry name" value="KRINGLE"/>
</dbReference>
<dbReference type="SMART" id="SM00130">
    <property type="entry name" value="KR"/>
    <property type="match status" value="1"/>
</dbReference>
<dbReference type="SMART" id="SM00020">
    <property type="entry name" value="Tryp_SPc"/>
    <property type="match status" value="1"/>
</dbReference>
<dbReference type="SUPFAM" id="SSF57440">
    <property type="entry name" value="Kringle-like"/>
    <property type="match status" value="1"/>
</dbReference>
<dbReference type="SUPFAM" id="SSF50494">
    <property type="entry name" value="Trypsin-like serine proteases"/>
    <property type="match status" value="1"/>
</dbReference>
<dbReference type="PROSITE" id="PS00022">
    <property type="entry name" value="EGF_1"/>
    <property type="match status" value="1"/>
</dbReference>
<dbReference type="PROSITE" id="PS50026">
    <property type="entry name" value="EGF_3"/>
    <property type="match status" value="1"/>
</dbReference>
<dbReference type="PROSITE" id="PS00021">
    <property type="entry name" value="KRINGLE_1"/>
    <property type="match status" value="1"/>
</dbReference>
<dbReference type="PROSITE" id="PS50070">
    <property type="entry name" value="KRINGLE_2"/>
    <property type="match status" value="1"/>
</dbReference>
<dbReference type="PROSITE" id="PS50240">
    <property type="entry name" value="TRYPSIN_DOM"/>
    <property type="match status" value="1"/>
</dbReference>
<dbReference type="PROSITE" id="PS00135">
    <property type="entry name" value="TRYPSIN_SER"/>
    <property type="match status" value="1"/>
</dbReference>
<reference key="1">
    <citation type="journal article" date="1985" name="Eur. J. Biochem.">
        <title>Cloning, nucleotide sequencing and expression of cDNAs encoding mouse urokinase-type plasminogen activator.</title>
        <authorList>
            <person name="Belin D."/>
            <person name="Vassalli J.-D."/>
            <person name="Combepine C."/>
            <person name="Godeau F."/>
            <person name="Nagamine Y."/>
            <person name="Reich E."/>
            <person name="Kocher H.P."/>
            <person name="Duvoisin R.M."/>
        </authorList>
    </citation>
    <scope>NUCLEOTIDE SEQUENCE [MRNA]</scope>
</reference>
<reference key="2">
    <citation type="journal article" date="1987" name="Biochemistry">
        <title>The murine urokinase-type plasminogen activator gene.</title>
        <authorList>
            <person name="Degen S.J.F."/>
            <person name="Heckel J.L."/>
            <person name="Reich E."/>
            <person name="Degen J.L."/>
        </authorList>
    </citation>
    <scope>NUCLEOTIDE SEQUENCE [GENOMIC DNA]</scope>
</reference>
<reference key="3">
    <citation type="journal article" date="2010" name="Cell">
        <title>A tissue-specific atlas of mouse protein phosphorylation and expression.</title>
        <authorList>
            <person name="Huttlin E.L."/>
            <person name="Jedrychowski M.P."/>
            <person name="Elias J.E."/>
            <person name="Goswami T."/>
            <person name="Rad R."/>
            <person name="Beausoleil S.A."/>
            <person name="Villen J."/>
            <person name="Haas W."/>
            <person name="Sowa M.E."/>
            <person name="Gygi S.P."/>
        </authorList>
    </citation>
    <scope>IDENTIFICATION BY MASS SPECTROMETRY [LARGE SCALE ANALYSIS]</scope>
    <source>
        <tissue>Kidney</tissue>
    </source>
</reference>
<reference key="4">
    <citation type="journal article" date="2010" name="J. Biol. Chem.">
        <title>Structure-based engineering of species selectivity in the interaction between urokinase and its receptor: implication for preclinical cancer therapy.</title>
        <authorList>
            <person name="Lin L."/>
            <person name="Gardsvoll H."/>
            <person name="Huai Q."/>
            <person name="Huang M."/>
            <person name="Ploug M."/>
        </authorList>
    </citation>
    <scope>X-RAY CRYSTALLOGRAPHY (3.2 ANGSTROMS) OF 21-154 IN COMPLEX WITH PLAUR</scope>
    <scope>DISULFIDE BONDS</scope>
</reference>
<comment type="function">
    <text evidence="2">Specifically cleaves the zymogen plasminogen to form the active enzyme plasmin.</text>
</comment>
<comment type="catalytic activity">
    <reaction>
        <text>Specific cleavage of Arg-|-Val bond in plasminogen to form plasmin.</text>
        <dbReference type="EC" id="3.4.21.73"/>
    </reaction>
</comment>
<comment type="activity regulation">
    <text evidence="2">Inhibited by SERPINA5 (By similarity). Inhibited by SERPINE1 (By similarity).</text>
</comment>
<comment type="subunit">
    <text evidence="2">Found in high and low molecular mass forms. Each consists of two chains, A and B. The high molecular mass form contains a long chain A which is cleaved to yield a short chain A. Forms heterodimer with SERPINA5. Binds LRP1B; binding is followed by internalization and degradation. Interacts with MRC2. Interacts with PLAUR. In complex with SERPINE1, interacts with PLAUR/uPAR. Interacts with SORL1 and LRP1, either alone or in complex with SERPINE1; these interactions are abolished in the presence of LRPAP1/RAP. The ternary complex composed of PLAUR-PLAU-PAI1 also interacts with SORLA.</text>
</comment>
<comment type="interaction">
    <interactant intactId="EBI-8365661">
        <id>P06869</id>
    </interactant>
    <interactant intactId="EBI-14060702">
        <id>Q9Z0K7</id>
        <label>Slurp1</label>
    </interactant>
    <organismsDiffer>false</organismsDiffer>
    <experiments>4</experiments>
</comment>
<comment type="subcellular location">
    <subcellularLocation>
        <location evidence="2">Secreted</location>
    </subcellularLocation>
</comment>
<comment type="PTM">
    <text evidence="2">Produced as an inactive single-chain protein (pro-uPA or sc-uPA), is processed into the active disulfide-linked two-chain form of PLAU/uPA by a proteolytic event mediated, at least, by TMPRSS4.</text>
</comment>
<comment type="similarity">
    <text evidence="6">Belongs to the peptidase S1 family.</text>
</comment>
<sequence length="433" mass="48268">MKVWLASLFLCALVVKNSEGGSVLGAPDESNCGCQNGGVCVSYKYFSRIRRCSCPRKFQGEHCEIDASKTCYHGNGDSYRGKANTDTKGRPCLAWNAPAVLQKPYNAHRPDAISLGLGKHNYCRNPDNQKRPWCYVQIGLRQFVQECMVHDCSLSKKPSSSVDQQGFQCGQKALRPRFKIVGGEFTEVENQPWFAAIYQKNKGGSPPSFKCGGSLISPCWVASAAHCFIQLPKKENYVVYLGQSKESSYNPGEMKFEVEQLILHEYYREDSLAYHNDIALLKIRTSTGQCAQPSRSIQTICLPPRFTDAPFGSDCEITGFGKESESDYLYPKNLKMSVVKLVSHEQCMQPHYYGSEINYKMLCAADPEWKTDSCKGDSGGPLICNIEGRPTLSGIVSWGRGCAEKNKPGVYTRVSHFLDWIQSHIGEEKGLAF</sequence>
<organism>
    <name type="scientific">Mus musculus</name>
    <name type="common">Mouse</name>
    <dbReference type="NCBI Taxonomy" id="10090"/>
    <lineage>
        <taxon>Eukaryota</taxon>
        <taxon>Metazoa</taxon>
        <taxon>Chordata</taxon>
        <taxon>Craniata</taxon>
        <taxon>Vertebrata</taxon>
        <taxon>Euteleostomi</taxon>
        <taxon>Mammalia</taxon>
        <taxon>Eutheria</taxon>
        <taxon>Euarchontoglires</taxon>
        <taxon>Glires</taxon>
        <taxon>Rodentia</taxon>
        <taxon>Myomorpha</taxon>
        <taxon>Muroidea</taxon>
        <taxon>Muridae</taxon>
        <taxon>Murinae</taxon>
        <taxon>Mus</taxon>
        <taxon>Mus</taxon>
    </lineage>
</organism>
<feature type="signal peptide" evidence="3">
    <location>
        <begin position="1"/>
        <end position="20"/>
    </location>
</feature>
<feature type="chain" id="PRO_0000028322" description="Urokinase-type plasminogen activator">
    <location>
        <begin position="21"/>
        <end position="433"/>
    </location>
</feature>
<feature type="chain" id="PRO_0000028323" description="Urokinase-type plasminogen activator long chain A" evidence="1">
    <location>
        <begin position="21"/>
        <end position="178"/>
    </location>
</feature>
<feature type="chain" id="PRO_0000028324" description="Urokinase-type plasminogen activator short chain A" evidence="1">
    <location>
        <begin position="157"/>
        <end position="178"/>
    </location>
</feature>
<feature type="chain" id="PRO_0000028325" description="Urokinase-type plasminogen activator chain B" evidence="1">
    <location>
        <begin position="180"/>
        <end position="433"/>
    </location>
</feature>
<feature type="domain" description="EGF-like" evidence="4">
    <location>
        <begin position="28"/>
        <end position="64"/>
    </location>
</feature>
<feature type="domain" description="Kringle" evidence="5">
    <location>
        <begin position="71"/>
        <end position="152"/>
    </location>
</feature>
<feature type="domain" description="Peptidase S1" evidence="6">
    <location>
        <begin position="180"/>
        <end position="426"/>
    </location>
</feature>
<feature type="region of interest" description="Binds urokinase plasminogen activator surface receptor" evidence="1">
    <location>
        <begin position="35"/>
        <end position="58"/>
    </location>
</feature>
<feature type="region of interest" description="Connecting peptide">
    <location>
        <begin position="153"/>
        <end position="179"/>
    </location>
</feature>
<feature type="active site" description="Charge relay system">
    <location>
        <position position="226"/>
    </location>
</feature>
<feature type="active site" description="Charge relay system">
    <location>
        <position position="277"/>
    </location>
</feature>
<feature type="active site" description="Charge relay system">
    <location>
        <position position="378"/>
    </location>
</feature>
<feature type="modified residue" description="Phosphoserine" evidence="2">
    <location>
        <position position="159"/>
    </location>
</feature>
<feature type="disulfide bond" evidence="7">
    <location>
        <begin position="32"/>
        <end position="40"/>
    </location>
</feature>
<feature type="disulfide bond" evidence="7">
    <location>
        <begin position="34"/>
        <end position="52"/>
    </location>
</feature>
<feature type="disulfide bond" evidence="7">
    <location>
        <begin position="54"/>
        <end position="63"/>
    </location>
</feature>
<feature type="disulfide bond" evidence="7">
    <location>
        <begin position="71"/>
        <end position="152"/>
    </location>
</feature>
<feature type="disulfide bond" evidence="7">
    <location>
        <begin position="92"/>
        <end position="134"/>
    </location>
</feature>
<feature type="disulfide bond" evidence="7">
    <location>
        <begin position="123"/>
        <end position="147"/>
    </location>
</feature>
<feature type="disulfide bond" description="Interchain (between A and B chains)" evidence="4 5 6">
    <location>
        <begin position="169"/>
        <end position="301"/>
    </location>
</feature>
<feature type="disulfide bond" evidence="1">
    <location>
        <begin position="211"/>
        <end position="227"/>
    </location>
</feature>
<feature type="disulfide bond" evidence="1">
    <location>
        <begin position="219"/>
        <end position="290"/>
    </location>
</feature>
<feature type="disulfide bond" evidence="1">
    <location>
        <begin position="315"/>
        <end position="384"/>
    </location>
</feature>
<feature type="disulfide bond" evidence="1">
    <location>
        <begin position="347"/>
        <end position="363"/>
    </location>
</feature>
<feature type="disulfide bond" evidence="1">
    <location>
        <begin position="374"/>
        <end position="402"/>
    </location>
</feature>
<feature type="strand" evidence="8">
    <location>
        <begin position="40"/>
        <end position="42"/>
    </location>
</feature>
<feature type="helix" evidence="8">
    <location>
        <begin position="44"/>
        <end position="46"/>
    </location>
</feature>
<feature type="strand" evidence="8">
    <location>
        <begin position="50"/>
        <end position="52"/>
    </location>
</feature>
<feature type="turn" evidence="8">
    <location>
        <begin position="60"/>
        <end position="63"/>
    </location>
</feature>
<feature type="strand" evidence="8">
    <location>
        <begin position="65"/>
        <end position="68"/>
    </location>
</feature>
<feature type="helix" evidence="8">
    <location>
        <begin position="100"/>
        <end position="102"/>
    </location>
</feature>
<feature type="strand" evidence="8">
    <location>
        <begin position="103"/>
        <end position="106"/>
    </location>
</feature>
<feature type="turn" evidence="8">
    <location>
        <begin position="110"/>
        <end position="116"/>
    </location>
</feature>
<feature type="strand" evidence="8">
    <location>
        <begin position="118"/>
        <end position="120"/>
    </location>
</feature>
<feature type="strand" evidence="8">
    <location>
        <begin position="133"/>
        <end position="138"/>
    </location>
</feature>
<feature type="strand" evidence="8">
    <location>
        <begin position="141"/>
        <end position="147"/>
    </location>
</feature>
<feature type="strand" evidence="10">
    <location>
        <begin position="181"/>
        <end position="185"/>
    </location>
</feature>
<feature type="helix" evidence="10">
    <location>
        <begin position="188"/>
        <end position="190"/>
    </location>
</feature>
<feature type="strand" evidence="10">
    <location>
        <begin position="194"/>
        <end position="199"/>
    </location>
</feature>
<feature type="strand" evidence="9">
    <location>
        <begin position="202"/>
        <end position="204"/>
    </location>
</feature>
<feature type="strand" evidence="10">
    <location>
        <begin position="208"/>
        <end position="217"/>
    </location>
</feature>
<feature type="strand" evidence="10">
    <location>
        <begin position="220"/>
        <end position="223"/>
    </location>
</feature>
<feature type="helix" evidence="10">
    <location>
        <begin position="225"/>
        <end position="227"/>
    </location>
</feature>
<feature type="strand" evidence="10">
    <location>
        <begin position="229"/>
        <end position="231"/>
    </location>
</feature>
<feature type="helix" evidence="10">
    <location>
        <begin position="234"/>
        <end position="236"/>
    </location>
</feature>
<feature type="strand" evidence="10">
    <location>
        <begin position="237"/>
        <end position="242"/>
    </location>
</feature>
<feature type="strand" evidence="10">
    <location>
        <begin position="254"/>
        <end position="263"/>
    </location>
</feature>
<feature type="strand" evidence="10">
    <location>
        <begin position="268"/>
        <end position="270"/>
    </location>
</feature>
<feature type="strand" evidence="10">
    <location>
        <begin position="273"/>
        <end position="276"/>
    </location>
</feature>
<feature type="strand" evidence="10">
    <location>
        <begin position="279"/>
        <end position="284"/>
    </location>
</feature>
<feature type="strand" evidence="10">
    <location>
        <begin position="314"/>
        <end position="320"/>
    </location>
</feature>
<feature type="strand" evidence="9">
    <location>
        <begin position="323"/>
        <end position="326"/>
    </location>
</feature>
<feature type="strand" evidence="10">
    <location>
        <begin position="335"/>
        <end position="342"/>
    </location>
</feature>
<feature type="helix" evidence="10">
    <location>
        <begin position="344"/>
        <end position="347"/>
    </location>
</feature>
<feature type="turn" evidence="10">
    <location>
        <begin position="350"/>
        <end position="353"/>
    </location>
</feature>
<feature type="helix" evidence="10">
    <location>
        <begin position="354"/>
        <end position="356"/>
    </location>
</feature>
<feature type="strand" evidence="10">
    <location>
        <begin position="361"/>
        <end position="365"/>
    </location>
</feature>
<feature type="strand" evidence="10">
    <location>
        <begin position="381"/>
        <end position="386"/>
    </location>
</feature>
<feature type="strand" evidence="10">
    <location>
        <begin position="389"/>
        <end position="398"/>
    </location>
</feature>
<feature type="strand" evidence="10">
    <location>
        <begin position="400"/>
        <end position="404"/>
    </location>
</feature>
<feature type="strand" evidence="11">
    <location>
        <begin position="405"/>
        <end position="407"/>
    </location>
</feature>
<feature type="strand" evidence="10">
    <location>
        <begin position="409"/>
        <end position="413"/>
    </location>
</feature>
<feature type="helix" evidence="10">
    <location>
        <begin position="414"/>
        <end position="416"/>
    </location>
</feature>
<feature type="helix" evidence="10">
    <location>
        <begin position="418"/>
        <end position="422"/>
    </location>
</feature>
<accession>P06869</accession>
<keyword id="KW-0002">3D-structure</keyword>
<keyword id="KW-1015">Disulfide bond</keyword>
<keyword id="KW-0245">EGF-like domain</keyword>
<keyword id="KW-0378">Hydrolase</keyword>
<keyword id="KW-0420">Kringle</keyword>
<keyword id="KW-0597">Phosphoprotein</keyword>
<keyword id="KW-0617">Plasminogen activation</keyword>
<keyword id="KW-0645">Protease</keyword>
<keyword id="KW-1185">Reference proteome</keyword>
<keyword id="KW-0964">Secreted</keyword>
<keyword id="KW-0720">Serine protease</keyword>
<keyword id="KW-0732">Signal</keyword>
<keyword id="KW-0865">Zymogen</keyword>
<evidence type="ECO:0000250" key="1"/>
<evidence type="ECO:0000250" key="2">
    <source>
        <dbReference type="UniProtKB" id="P00749"/>
    </source>
</evidence>
<evidence type="ECO:0000255" key="3"/>
<evidence type="ECO:0000255" key="4">
    <source>
        <dbReference type="PROSITE-ProRule" id="PRU00076"/>
    </source>
</evidence>
<evidence type="ECO:0000255" key="5">
    <source>
        <dbReference type="PROSITE-ProRule" id="PRU00121"/>
    </source>
</evidence>
<evidence type="ECO:0000255" key="6">
    <source>
        <dbReference type="PROSITE-ProRule" id="PRU00274"/>
    </source>
</evidence>
<evidence type="ECO:0000269" key="7">
    <source>
    </source>
</evidence>
<evidence type="ECO:0007829" key="8">
    <source>
        <dbReference type="PDB" id="3LAQ"/>
    </source>
</evidence>
<evidence type="ECO:0007829" key="9">
    <source>
        <dbReference type="PDB" id="5LHQ"/>
    </source>
</evidence>
<evidence type="ECO:0007829" key="10">
    <source>
        <dbReference type="PDB" id="5LHR"/>
    </source>
</evidence>
<evidence type="ECO:0007829" key="11">
    <source>
        <dbReference type="PDB" id="5LHS"/>
    </source>
</evidence>